<proteinExistence type="inferred from homology"/>
<keyword id="KW-0328">Glycosyltransferase</keyword>
<keyword id="KW-0479">Metal-binding</keyword>
<keyword id="KW-0671">Queuosine biosynthesis</keyword>
<keyword id="KW-1185">Reference proteome</keyword>
<keyword id="KW-0808">Transferase</keyword>
<keyword id="KW-0819">tRNA processing</keyword>
<keyword id="KW-0862">Zinc</keyword>
<evidence type="ECO:0000255" key="1">
    <source>
        <dbReference type="HAMAP-Rule" id="MF_00168"/>
    </source>
</evidence>
<protein>
    <recommendedName>
        <fullName evidence="1">Queuine tRNA-ribosyltransferase</fullName>
        <ecNumber evidence="1">2.4.2.29</ecNumber>
    </recommendedName>
    <alternativeName>
        <fullName evidence="1">Guanine insertion enzyme</fullName>
    </alternativeName>
    <alternativeName>
        <fullName evidence="1">tRNA-guanine transglycosylase</fullName>
    </alternativeName>
</protein>
<organism>
    <name type="scientific">Polaromonas sp. (strain JS666 / ATCC BAA-500)</name>
    <dbReference type="NCBI Taxonomy" id="296591"/>
    <lineage>
        <taxon>Bacteria</taxon>
        <taxon>Pseudomonadati</taxon>
        <taxon>Pseudomonadota</taxon>
        <taxon>Betaproteobacteria</taxon>
        <taxon>Burkholderiales</taxon>
        <taxon>Comamonadaceae</taxon>
        <taxon>Polaromonas</taxon>
    </lineage>
</organism>
<feature type="chain" id="PRO_1000058285" description="Queuine tRNA-ribosyltransferase">
    <location>
        <begin position="1"/>
        <end position="398"/>
    </location>
</feature>
<feature type="region of interest" description="RNA binding" evidence="1">
    <location>
        <begin position="263"/>
        <end position="269"/>
    </location>
</feature>
<feature type="region of interest" description="RNA binding; important for wobble base 34 recognition" evidence="1">
    <location>
        <begin position="287"/>
        <end position="291"/>
    </location>
</feature>
<feature type="active site" description="Proton acceptor" evidence="1">
    <location>
        <position position="102"/>
    </location>
</feature>
<feature type="active site" description="Nucleophile" evidence="1">
    <location>
        <position position="282"/>
    </location>
</feature>
<feature type="binding site" evidence="1">
    <location>
        <begin position="102"/>
        <end position="106"/>
    </location>
    <ligand>
        <name>substrate</name>
    </ligand>
</feature>
<feature type="binding site" evidence="1">
    <location>
        <position position="156"/>
    </location>
    <ligand>
        <name>substrate</name>
    </ligand>
</feature>
<feature type="binding site" evidence="1">
    <location>
        <position position="205"/>
    </location>
    <ligand>
        <name>substrate</name>
    </ligand>
</feature>
<feature type="binding site" evidence="1">
    <location>
        <position position="232"/>
    </location>
    <ligand>
        <name>substrate</name>
    </ligand>
</feature>
<feature type="binding site" evidence="1">
    <location>
        <position position="320"/>
    </location>
    <ligand>
        <name>Zn(2+)</name>
        <dbReference type="ChEBI" id="CHEBI:29105"/>
    </ligand>
</feature>
<feature type="binding site" evidence="1">
    <location>
        <position position="322"/>
    </location>
    <ligand>
        <name>Zn(2+)</name>
        <dbReference type="ChEBI" id="CHEBI:29105"/>
    </ligand>
</feature>
<feature type="binding site" evidence="1">
    <location>
        <position position="325"/>
    </location>
    <ligand>
        <name>Zn(2+)</name>
        <dbReference type="ChEBI" id="CHEBI:29105"/>
    </ligand>
</feature>
<feature type="binding site" evidence="1">
    <location>
        <position position="362"/>
    </location>
    <ligand>
        <name>Zn(2+)</name>
        <dbReference type="ChEBI" id="CHEBI:29105"/>
    </ligand>
</feature>
<dbReference type="EC" id="2.4.2.29" evidence="1"/>
<dbReference type="EMBL" id="CP000316">
    <property type="protein sequence ID" value="ABE42430.1"/>
    <property type="molecule type" value="Genomic_DNA"/>
</dbReference>
<dbReference type="RefSeq" id="WP_011481437.1">
    <property type="nucleotide sequence ID" value="NC_007948.1"/>
</dbReference>
<dbReference type="SMR" id="Q12GB2"/>
<dbReference type="STRING" id="296591.Bpro_0466"/>
<dbReference type="KEGG" id="pol:Bpro_0466"/>
<dbReference type="eggNOG" id="COG0343">
    <property type="taxonomic scope" value="Bacteria"/>
</dbReference>
<dbReference type="HOGENOM" id="CLU_022060_0_1_4"/>
<dbReference type="OrthoDB" id="9805417at2"/>
<dbReference type="UniPathway" id="UPA00392"/>
<dbReference type="Proteomes" id="UP000001983">
    <property type="component" value="Chromosome"/>
</dbReference>
<dbReference type="GO" id="GO:0005829">
    <property type="term" value="C:cytosol"/>
    <property type="evidence" value="ECO:0007669"/>
    <property type="project" value="TreeGrafter"/>
</dbReference>
<dbReference type="GO" id="GO:0046872">
    <property type="term" value="F:metal ion binding"/>
    <property type="evidence" value="ECO:0007669"/>
    <property type="project" value="UniProtKB-KW"/>
</dbReference>
<dbReference type="GO" id="GO:0008479">
    <property type="term" value="F:tRNA-guanosine(34) queuine transglycosylase activity"/>
    <property type="evidence" value="ECO:0007669"/>
    <property type="project" value="UniProtKB-UniRule"/>
</dbReference>
<dbReference type="GO" id="GO:0008616">
    <property type="term" value="P:queuosine biosynthetic process"/>
    <property type="evidence" value="ECO:0007669"/>
    <property type="project" value="UniProtKB-UniRule"/>
</dbReference>
<dbReference type="GO" id="GO:0002099">
    <property type="term" value="P:tRNA wobble guanine modification"/>
    <property type="evidence" value="ECO:0007669"/>
    <property type="project" value="TreeGrafter"/>
</dbReference>
<dbReference type="GO" id="GO:0101030">
    <property type="term" value="P:tRNA-guanine transglycosylation"/>
    <property type="evidence" value="ECO:0007669"/>
    <property type="project" value="InterPro"/>
</dbReference>
<dbReference type="FunFam" id="3.20.20.105:FF:000001">
    <property type="entry name" value="Queuine tRNA-ribosyltransferase"/>
    <property type="match status" value="1"/>
</dbReference>
<dbReference type="Gene3D" id="3.20.20.105">
    <property type="entry name" value="Queuine tRNA-ribosyltransferase-like"/>
    <property type="match status" value="1"/>
</dbReference>
<dbReference type="HAMAP" id="MF_00168">
    <property type="entry name" value="Q_tRNA_Tgt"/>
    <property type="match status" value="1"/>
</dbReference>
<dbReference type="InterPro" id="IPR050076">
    <property type="entry name" value="ArchSynthase1/Queuine_TRR"/>
</dbReference>
<dbReference type="InterPro" id="IPR004803">
    <property type="entry name" value="TGT"/>
</dbReference>
<dbReference type="InterPro" id="IPR036511">
    <property type="entry name" value="TGT-like_sf"/>
</dbReference>
<dbReference type="InterPro" id="IPR002616">
    <property type="entry name" value="tRNA_ribo_trans-like"/>
</dbReference>
<dbReference type="NCBIfam" id="TIGR00430">
    <property type="entry name" value="Q_tRNA_tgt"/>
    <property type="match status" value="1"/>
</dbReference>
<dbReference type="NCBIfam" id="TIGR00449">
    <property type="entry name" value="tgt_general"/>
    <property type="match status" value="1"/>
</dbReference>
<dbReference type="PANTHER" id="PTHR46499">
    <property type="entry name" value="QUEUINE TRNA-RIBOSYLTRANSFERASE"/>
    <property type="match status" value="1"/>
</dbReference>
<dbReference type="PANTHER" id="PTHR46499:SF1">
    <property type="entry name" value="QUEUINE TRNA-RIBOSYLTRANSFERASE"/>
    <property type="match status" value="1"/>
</dbReference>
<dbReference type="Pfam" id="PF01702">
    <property type="entry name" value="TGT"/>
    <property type="match status" value="1"/>
</dbReference>
<dbReference type="SUPFAM" id="SSF51713">
    <property type="entry name" value="tRNA-guanine transglycosylase"/>
    <property type="match status" value="1"/>
</dbReference>
<sequence>MLEFEVLKTDARTGEGANAHPGSHARRGQLTLTHGVVQTPIFMPVGTYGTVKGVMPQSLHEMGAQIILGNTFHLWMRPGLDVMKQFGGLHRFESWDKPILTDSGGFQVWSLGDMRKISEEGVKFASPVNGDKLFLTPEISMQIQTVLNSDIVMQFDECTPYDTKGHITTESEARSSMELSLRWAKRCVAEFDKLENPNALFGIVQGGMYQNLRHESLEALVELDLPGYAVGGVSVGEPKEEMQRIMAHTPHRLPADKPRYLMGVGTPEDLVEGVGAGIDMFDCVMPTRNARNGHLFTRFGDLKIRNARHKADEQPLDTTCTCYTCKGRTMPDGSTSGGFSRAYLHHLDRCGEMLGPMLASIHNLHYYLNLMQEIRDALDAGRFGEFAARFRTDRLRGV</sequence>
<gene>
    <name evidence="1" type="primary">tgt</name>
    <name type="ordered locus">Bpro_0466</name>
</gene>
<comment type="function">
    <text evidence="1">Catalyzes the base-exchange of a guanine (G) residue with the queuine precursor 7-aminomethyl-7-deazaguanine (PreQ1) at position 34 (anticodon wobble position) in tRNAs with GU(N) anticodons (tRNA-Asp, -Asn, -His and -Tyr). Catalysis occurs through a double-displacement mechanism. The nucleophile active site attacks the C1' of nucleotide 34 to detach the guanine base from the RNA, forming a covalent enzyme-RNA intermediate. The proton acceptor active site deprotonates the incoming PreQ1, allowing a nucleophilic attack on the C1' of the ribose to form the product. After dissociation, two additional enzymatic reactions on the tRNA convert PreQ1 to queuine (Q), resulting in the hypermodified nucleoside queuosine (7-(((4,5-cis-dihydroxy-2-cyclopenten-1-yl)amino)methyl)-7-deazaguanosine).</text>
</comment>
<comment type="catalytic activity">
    <reaction evidence="1">
        <text>7-aminomethyl-7-carbaguanine + guanosine(34) in tRNA = 7-aminomethyl-7-carbaguanosine(34) in tRNA + guanine</text>
        <dbReference type="Rhea" id="RHEA:24104"/>
        <dbReference type="Rhea" id="RHEA-COMP:10341"/>
        <dbReference type="Rhea" id="RHEA-COMP:10342"/>
        <dbReference type="ChEBI" id="CHEBI:16235"/>
        <dbReference type="ChEBI" id="CHEBI:58703"/>
        <dbReference type="ChEBI" id="CHEBI:74269"/>
        <dbReference type="ChEBI" id="CHEBI:82833"/>
        <dbReference type="EC" id="2.4.2.29"/>
    </reaction>
</comment>
<comment type="cofactor">
    <cofactor evidence="1">
        <name>Zn(2+)</name>
        <dbReference type="ChEBI" id="CHEBI:29105"/>
    </cofactor>
    <text evidence="1">Binds 1 zinc ion per subunit.</text>
</comment>
<comment type="pathway">
    <text evidence="1">tRNA modification; tRNA-queuosine biosynthesis.</text>
</comment>
<comment type="subunit">
    <text evidence="1">Homodimer. Within each dimer, one monomer is responsible for RNA recognition and catalysis, while the other monomer binds to the replacement base PreQ1.</text>
</comment>
<comment type="similarity">
    <text evidence="1">Belongs to the queuine tRNA-ribosyltransferase family.</text>
</comment>
<name>TGT_POLSJ</name>
<reference key="1">
    <citation type="journal article" date="2008" name="Appl. Environ. Microbiol.">
        <title>The genome of Polaromonas sp. strain JS666: insights into the evolution of a hydrocarbon- and xenobiotic-degrading bacterium, and features of relevance to biotechnology.</title>
        <authorList>
            <person name="Mattes T.E."/>
            <person name="Alexander A.K."/>
            <person name="Richardson P.M."/>
            <person name="Munk A.C."/>
            <person name="Han C.S."/>
            <person name="Stothard P."/>
            <person name="Coleman N.V."/>
        </authorList>
    </citation>
    <scope>NUCLEOTIDE SEQUENCE [LARGE SCALE GENOMIC DNA]</scope>
    <source>
        <strain>JS666 / ATCC BAA-500</strain>
    </source>
</reference>
<accession>Q12GB2</accession>